<evidence type="ECO:0000255" key="1">
    <source>
        <dbReference type="HAMAP-Rule" id="MF_01431"/>
    </source>
</evidence>
<proteinExistence type="inferred from homology"/>
<reference key="1">
    <citation type="journal article" date="2001" name="Nature">
        <title>Genome sequence of enterohaemorrhagic Escherichia coli O157:H7.</title>
        <authorList>
            <person name="Perna N.T."/>
            <person name="Plunkett G. III"/>
            <person name="Burland V."/>
            <person name="Mau B."/>
            <person name="Glasner J.D."/>
            <person name="Rose D.J."/>
            <person name="Mayhew G.F."/>
            <person name="Evans P.S."/>
            <person name="Gregor J."/>
            <person name="Kirkpatrick H.A."/>
            <person name="Posfai G."/>
            <person name="Hackett J."/>
            <person name="Klink S."/>
            <person name="Boutin A."/>
            <person name="Shao Y."/>
            <person name="Miller L."/>
            <person name="Grotbeck E.J."/>
            <person name="Davis N.W."/>
            <person name="Lim A."/>
            <person name="Dimalanta E.T."/>
            <person name="Potamousis K."/>
            <person name="Apodaca J."/>
            <person name="Anantharaman T.S."/>
            <person name="Lin J."/>
            <person name="Yen G."/>
            <person name="Schwartz D.C."/>
            <person name="Welch R.A."/>
            <person name="Blattner F.R."/>
        </authorList>
    </citation>
    <scope>NUCLEOTIDE SEQUENCE [LARGE SCALE GENOMIC DNA]</scope>
    <source>
        <strain>O157:H7 / EDL933 / ATCC 700927 / EHEC</strain>
    </source>
</reference>
<reference key="2">
    <citation type="journal article" date="2001" name="DNA Res.">
        <title>Complete genome sequence of enterohemorrhagic Escherichia coli O157:H7 and genomic comparison with a laboratory strain K-12.</title>
        <authorList>
            <person name="Hayashi T."/>
            <person name="Makino K."/>
            <person name="Ohnishi M."/>
            <person name="Kurokawa K."/>
            <person name="Ishii K."/>
            <person name="Yokoyama K."/>
            <person name="Han C.-G."/>
            <person name="Ohtsubo E."/>
            <person name="Nakayama K."/>
            <person name="Murata T."/>
            <person name="Tanaka M."/>
            <person name="Tobe T."/>
            <person name="Iida T."/>
            <person name="Takami H."/>
            <person name="Honda T."/>
            <person name="Sasakawa C."/>
            <person name="Ogasawara N."/>
            <person name="Yasunaga T."/>
            <person name="Kuhara S."/>
            <person name="Shiba T."/>
            <person name="Hattori M."/>
            <person name="Shinagawa H."/>
        </authorList>
    </citation>
    <scope>NUCLEOTIDE SEQUENCE [LARGE SCALE GENOMIC DNA]</scope>
    <source>
        <strain>O157:H7 / Sakai / RIMD 0509952 / EHEC</strain>
    </source>
</reference>
<sequence length="311" mass="33837">MALPILLDCDPGHDDAIAIVLALASPELDVKAITSSAGNQTPEKTLRNVLRMLTLLNRTDIPVAGGAVKPLMRELIIADNVHGESGLDGPALPEPTFAPQNCTAVELMAKTLRESAEPVTIVSTGPQTNVALLLNSHPELHSKIARIVIMGGAMGLGNWTPAAEFNIYVDPEAAEIVFQSGIPVVMAGLDVTHKAQIHVEDTERFRAIGNPVSTIVAELLDFFLEYHKDEKWGFVGAPLHDPCTIAWLLKPELFTTVERWVGVETQGKYTQGMTVVDYYYLTGNKPNATVMVDVDRQGFVDLLADRLKFYA</sequence>
<keyword id="KW-0326">Glycosidase</keyword>
<keyword id="KW-0378">Hydrolase</keyword>
<keyword id="KW-1185">Reference proteome</keyword>
<accession>Q8XBL8</accession>
<accession>Q7AGN5</accession>
<comment type="function">
    <text evidence="1">Hydrolyzes with equal efficiency cytidine or uridine to ribose and cytosine or uracil, respectively.</text>
</comment>
<comment type="similarity">
    <text evidence="1">Belongs to the IUNH family. RihA subfamily.</text>
</comment>
<dbReference type="EC" id="3.2.-.-" evidence="1"/>
<dbReference type="EMBL" id="AE005174">
    <property type="protein sequence ID" value="AAG54985.1"/>
    <property type="molecule type" value="Genomic_DNA"/>
</dbReference>
<dbReference type="EMBL" id="BA000007">
    <property type="protein sequence ID" value="BAB34113.1"/>
    <property type="molecule type" value="Genomic_DNA"/>
</dbReference>
<dbReference type="PIR" id="B90715">
    <property type="entry name" value="B90715"/>
</dbReference>
<dbReference type="PIR" id="E85565">
    <property type="entry name" value="E85565"/>
</dbReference>
<dbReference type="RefSeq" id="NP_308717.1">
    <property type="nucleotide sequence ID" value="NC_002695.1"/>
</dbReference>
<dbReference type="RefSeq" id="WP_001207527.1">
    <property type="nucleotide sequence ID" value="NZ_VOAI01000012.1"/>
</dbReference>
<dbReference type="SMR" id="Q8XBL8"/>
<dbReference type="STRING" id="155864.Z0801"/>
<dbReference type="GeneID" id="917051"/>
<dbReference type="KEGG" id="ece:Z0801"/>
<dbReference type="KEGG" id="ecs:ECs_0690"/>
<dbReference type="PATRIC" id="fig|386585.9.peg.804"/>
<dbReference type="eggNOG" id="COG1957">
    <property type="taxonomic scope" value="Bacteria"/>
</dbReference>
<dbReference type="HOGENOM" id="CLU_036838_2_0_6"/>
<dbReference type="OMA" id="WVGVETK"/>
<dbReference type="Proteomes" id="UP000000558">
    <property type="component" value="Chromosome"/>
</dbReference>
<dbReference type="Proteomes" id="UP000002519">
    <property type="component" value="Chromosome"/>
</dbReference>
<dbReference type="GO" id="GO:0005829">
    <property type="term" value="C:cytosol"/>
    <property type="evidence" value="ECO:0007669"/>
    <property type="project" value="TreeGrafter"/>
</dbReference>
<dbReference type="GO" id="GO:0008477">
    <property type="term" value="F:purine nucleosidase activity"/>
    <property type="evidence" value="ECO:0007669"/>
    <property type="project" value="TreeGrafter"/>
</dbReference>
<dbReference type="GO" id="GO:0045437">
    <property type="term" value="F:uridine nucleosidase activity"/>
    <property type="evidence" value="ECO:0007669"/>
    <property type="project" value="InterPro"/>
</dbReference>
<dbReference type="GO" id="GO:0015949">
    <property type="term" value="P:nucleobase-containing small molecule interconversion"/>
    <property type="evidence" value="ECO:0007669"/>
    <property type="project" value="InterPro"/>
</dbReference>
<dbReference type="GO" id="GO:0006152">
    <property type="term" value="P:purine nucleoside catabolic process"/>
    <property type="evidence" value="ECO:0007669"/>
    <property type="project" value="TreeGrafter"/>
</dbReference>
<dbReference type="GO" id="GO:0006206">
    <property type="term" value="P:pyrimidine nucleobase metabolic process"/>
    <property type="evidence" value="ECO:0007669"/>
    <property type="project" value="UniProtKB-UniRule"/>
</dbReference>
<dbReference type="CDD" id="cd02651">
    <property type="entry name" value="nuc_hydro_IU_UC_XIUA"/>
    <property type="match status" value="1"/>
</dbReference>
<dbReference type="FunFam" id="3.90.245.10:FF:000001">
    <property type="entry name" value="Pyrimidine-specific ribonucleoside hydrolase RihA"/>
    <property type="match status" value="1"/>
</dbReference>
<dbReference type="Gene3D" id="3.90.245.10">
    <property type="entry name" value="Ribonucleoside hydrolase-like"/>
    <property type="match status" value="1"/>
</dbReference>
<dbReference type="HAMAP" id="MF_01431">
    <property type="entry name" value="Pyrim_hydro_RihA"/>
    <property type="match status" value="1"/>
</dbReference>
<dbReference type="InterPro" id="IPR015910">
    <property type="entry name" value="I/U_nuclsd_hydro_CS"/>
</dbReference>
<dbReference type="InterPro" id="IPR001910">
    <property type="entry name" value="Inosine/uridine_hydrolase_dom"/>
</dbReference>
<dbReference type="InterPro" id="IPR023186">
    <property type="entry name" value="IUNH"/>
</dbReference>
<dbReference type="InterPro" id="IPR022975">
    <property type="entry name" value="Pyrim_hydro_RihA"/>
</dbReference>
<dbReference type="InterPro" id="IPR036452">
    <property type="entry name" value="Ribo_hydro-like"/>
</dbReference>
<dbReference type="NCBIfam" id="NF007761">
    <property type="entry name" value="PRK10443.1"/>
    <property type="match status" value="1"/>
</dbReference>
<dbReference type="PANTHER" id="PTHR12304">
    <property type="entry name" value="INOSINE-URIDINE PREFERRING NUCLEOSIDE HYDROLASE"/>
    <property type="match status" value="1"/>
</dbReference>
<dbReference type="PANTHER" id="PTHR12304:SF4">
    <property type="entry name" value="URIDINE NUCLEOSIDASE"/>
    <property type="match status" value="1"/>
</dbReference>
<dbReference type="Pfam" id="PF01156">
    <property type="entry name" value="IU_nuc_hydro"/>
    <property type="match status" value="1"/>
</dbReference>
<dbReference type="SUPFAM" id="SSF53590">
    <property type="entry name" value="Nucleoside hydrolase"/>
    <property type="match status" value="1"/>
</dbReference>
<dbReference type="PROSITE" id="PS01247">
    <property type="entry name" value="IUNH"/>
    <property type="match status" value="1"/>
</dbReference>
<name>RIHA_ECO57</name>
<protein>
    <recommendedName>
        <fullName evidence="1">Pyrimidine-specific ribonucleoside hydrolase RihA</fullName>
        <ecNumber evidence="1">3.2.-.-</ecNumber>
    </recommendedName>
    <alternativeName>
        <fullName evidence="1">Cytidine/uridine-specific hydrolase</fullName>
    </alternativeName>
</protein>
<gene>
    <name evidence="1" type="primary">rihA</name>
    <name type="ordered locus">Z0801</name>
    <name type="ordered locus">ECs0690</name>
</gene>
<organism>
    <name type="scientific">Escherichia coli O157:H7</name>
    <dbReference type="NCBI Taxonomy" id="83334"/>
    <lineage>
        <taxon>Bacteria</taxon>
        <taxon>Pseudomonadati</taxon>
        <taxon>Pseudomonadota</taxon>
        <taxon>Gammaproteobacteria</taxon>
        <taxon>Enterobacterales</taxon>
        <taxon>Enterobacteriaceae</taxon>
        <taxon>Escherichia</taxon>
    </lineage>
</organism>
<feature type="chain" id="PRO_0000206814" description="Pyrimidine-specific ribonucleoside hydrolase RihA">
    <location>
        <begin position="1"/>
        <end position="311"/>
    </location>
</feature>
<feature type="active site" evidence="1">
    <location>
        <position position="240"/>
    </location>
</feature>